<dbReference type="EMBL" id="CP000510">
    <property type="protein sequence ID" value="ABM05204.1"/>
    <property type="molecule type" value="Genomic_DNA"/>
</dbReference>
<dbReference type="RefSeq" id="WP_011771752.1">
    <property type="nucleotide sequence ID" value="NC_008709.1"/>
</dbReference>
<dbReference type="SMR" id="A1T0D9"/>
<dbReference type="STRING" id="357804.Ping_3521"/>
<dbReference type="KEGG" id="pin:Ping_3521"/>
<dbReference type="eggNOG" id="COG0090">
    <property type="taxonomic scope" value="Bacteria"/>
</dbReference>
<dbReference type="HOGENOM" id="CLU_036235_2_1_6"/>
<dbReference type="OrthoDB" id="9778722at2"/>
<dbReference type="Proteomes" id="UP000000639">
    <property type="component" value="Chromosome"/>
</dbReference>
<dbReference type="GO" id="GO:0015934">
    <property type="term" value="C:large ribosomal subunit"/>
    <property type="evidence" value="ECO:0007669"/>
    <property type="project" value="InterPro"/>
</dbReference>
<dbReference type="GO" id="GO:0019843">
    <property type="term" value="F:rRNA binding"/>
    <property type="evidence" value="ECO:0007669"/>
    <property type="project" value="UniProtKB-UniRule"/>
</dbReference>
<dbReference type="GO" id="GO:0003735">
    <property type="term" value="F:structural constituent of ribosome"/>
    <property type="evidence" value="ECO:0007669"/>
    <property type="project" value="InterPro"/>
</dbReference>
<dbReference type="GO" id="GO:0016740">
    <property type="term" value="F:transferase activity"/>
    <property type="evidence" value="ECO:0007669"/>
    <property type="project" value="InterPro"/>
</dbReference>
<dbReference type="GO" id="GO:0002181">
    <property type="term" value="P:cytoplasmic translation"/>
    <property type="evidence" value="ECO:0007669"/>
    <property type="project" value="TreeGrafter"/>
</dbReference>
<dbReference type="FunFam" id="2.30.30.30:FF:000001">
    <property type="entry name" value="50S ribosomal protein L2"/>
    <property type="match status" value="1"/>
</dbReference>
<dbReference type="FunFam" id="2.40.50.140:FF:000003">
    <property type="entry name" value="50S ribosomal protein L2"/>
    <property type="match status" value="1"/>
</dbReference>
<dbReference type="FunFam" id="4.10.950.10:FF:000001">
    <property type="entry name" value="50S ribosomal protein L2"/>
    <property type="match status" value="1"/>
</dbReference>
<dbReference type="Gene3D" id="2.30.30.30">
    <property type="match status" value="1"/>
</dbReference>
<dbReference type="Gene3D" id="2.40.50.140">
    <property type="entry name" value="Nucleic acid-binding proteins"/>
    <property type="match status" value="1"/>
</dbReference>
<dbReference type="Gene3D" id="4.10.950.10">
    <property type="entry name" value="Ribosomal protein L2, domain 3"/>
    <property type="match status" value="1"/>
</dbReference>
<dbReference type="HAMAP" id="MF_01320_B">
    <property type="entry name" value="Ribosomal_uL2_B"/>
    <property type="match status" value="1"/>
</dbReference>
<dbReference type="InterPro" id="IPR012340">
    <property type="entry name" value="NA-bd_OB-fold"/>
</dbReference>
<dbReference type="InterPro" id="IPR014722">
    <property type="entry name" value="Rib_uL2_dom2"/>
</dbReference>
<dbReference type="InterPro" id="IPR002171">
    <property type="entry name" value="Ribosomal_uL2"/>
</dbReference>
<dbReference type="InterPro" id="IPR005880">
    <property type="entry name" value="Ribosomal_uL2_bac/org-type"/>
</dbReference>
<dbReference type="InterPro" id="IPR022669">
    <property type="entry name" value="Ribosomal_uL2_C"/>
</dbReference>
<dbReference type="InterPro" id="IPR022671">
    <property type="entry name" value="Ribosomal_uL2_CS"/>
</dbReference>
<dbReference type="InterPro" id="IPR014726">
    <property type="entry name" value="Ribosomal_uL2_dom3"/>
</dbReference>
<dbReference type="InterPro" id="IPR022666">
    <property type="entry name" value="Ribosomal_uL2_RNA-bd_dom"/>
</dbReference>
<dbReference type="InterPro" id="IPR008991">
    <property type="entry name" value="Translation_prot_SH3-like_sf"/>
</dbReference>
<dbReference type="NCBIfam" id="TIGR01171">
    <property type="entry name" value="rplB_bact"/>
    <property type="match status" value="1"/>
</dbReference>
<dbReference type="PANTHER" id="PTHR13691:SF5">
    <property type="entry name" value="LARGE RIBOSOMAL SUBUNIT PROTEIN UL2M"/>
    <property type="match status" value="1"/>
</dbReference>
<dbReference type="PANTHER" id="PTHR13691">
    <property type="entry name" value="RIBOSOMAL PROTEIN L2"/>
    <property type="match status" value="1"/>
</dbReference>
<dbReference type="Pfam" id="PF00181">
    <property type="entry name" value="Ribosomal_L2"/>
    <property type="match status" value="1"/>
</dbReference>
<dbReference type="Pfam" id="PF03947">
    <property type="entry name" value="Ribosomal_L2_C"/>
    <property type="match status" value="1"/>
</dbReference>
<dbReference type="PIRSF" id="PIRSF002158">
    <property type="entry name" value="Ribosomal_L2"/>
    <property type="match status" value="1"/>
</dbReference>
<dbReference type="SMART" id="SM01383">
    <property type="entry name" value="Ribosomal_L2"/>
    <property type="match status" value="1"/>
</dbReference>
<dbReference type="SMART" id="SM01382">
    <property type="entry name" value="Ribosomal_L2_C"/>
    <property type="match status" value="1"/>
</dbReference>
<dbReference type="SUPFAM" id="SSF50249">
    <property type="entry name" value="Nucleic acid-binding proteins"/>
    <property type="match status" value="1"/>
</dbReference>
<dbReference type="SUPFAM" id="SSF50104">
    <property type="entry name" value="Translation proteins SH3-like domain"/>
    <property type="match status" value="1"/>
</dbReference>
<dbReference type="PROSITE" id="PS00467">
    <property type="entry name" value="RIBOSOMAL_L2"/>
    <property type="match status" value="1"/>
</dbReference>
<reference key="1">
    <citation type="journal article" date="2008" name="BMC Genomics">
        <title>Genomics of an extreme psychrophile, Psychromonas ingrahamii.</title>
        <authorList>
            <person name="Riley M."/>
            <person name="Staley J.T."/>
            <person name="Danchin A."/>
            <person name="Wang T.Z."/>
            <person name="Brettin T.S."/>
            <person name="Hauser L.J."/>
            <person name="Land M.L."/>
            <person name="Thompson L.S."/>
        </authorList>
    </citation>
    <scope>NUCLEOTIDE SEQUENCE [LARGE SCALE GENOMIC DNA]</scope>
    <source>
        <strain>DSM 17664 / CCUG 51855 / 37</strain>
    </source>
</reference>
<feature type="chain" id="PRO_0000309991" description="Large ribosomal subunit protein uL2">
    <location>
        <begin position="1"/>
        <end position="275"/>
    </location>
</feature>
<feature type="region of interest" description="Disordered" evidence="2">
    <location>
        <begin position="223"/>
        <end position="275"/>
    </location>
</feature>
<keyword id="KW-1185">Reference proteome</keyword>
<keyword id="KW-0687">Ribonucleoprotein</keyword>
<keyword id="KW-0689">Ribosomal protein</keyword>
<keyword id="KW-0694">RNA-binding</keyword>
<keyword id="KW-0699">rRNA-binding</keyword>
<comment type="function">
    <text evidence="1">One of the primary rRNA binding proteins. Required for association of the 30S and 50S subunits to form the 70S ribosome, for tRNA binding and peptide bond formation. It has been suggested to have peptidyltransferase activity; this is somewhat controversial. Makes several contacts with the 16S rRNA in the 70S ribosome.</text>
</comment>
<comment type="subunit">
    <text evidence="1">Part of the 50S ribosomal subunit. Forms a bridge to the 30S subunit in the 70S ribosome.</text>
</comment>
<comment type="similarity">
    <text evidence="1">Belongs to the universal ribosomal protein uL2 family.</text>
</comment>
<organism>
    <name type="scientific">Psychromonas ingrahamii (strain DSM 17664 / CCUG 51855 / 37)</name>
    <dbReference type="NCBI Taxonomy" id="357804"/>
    <lineage>
        <taxon>Bacteria</taxon>
        <taxon>Pseudomonadati</taxon>
        <taxon>Pseudomonadota</taxon>
        <taxon>Gammaproteobacteria</taxon>
        <taxon>Alteromonadales</taxon>
        <taxon>Psychromonadaceae</taxon>
        <taxon>Psychromonas</taxon>
    </lineage>
</organism>
<sequence>MAIVKCKPTSPGRRHLVKVVNNDLHKGKPFAALLESKSKSGGRNNGGRITVRHIGGGHKQHYRIVDFKRNKDGIPAKVERLEYDPNRSANIALVLYSDGERRYILAPKGLVAGDQIISGEDASIKVGNCLPMRNIPVGTTVHAVEMKPAKGAQIARSAGAYSQIVARDGAYVTLRLRSGEMRKIPTECRATIGEVGNAEHMLRQLGKAGATRWRGVRPTVRGVVMNPVDHPHGGGEGKSSGGRHPVSPWGMPTKGYKTRKNKGTDQYIVRRRNKK</sequence>
<protein>
    <recommendedName>
        <fullName evidence="1">Large ribosomal subunit protein uL2</fullName>
    </recommendedName>
    <alternativeName>
        <fullName evidence="3">50S ribosomal protein L2</fullName>
    </alternativeName>
</protein>
<evidence type="ECO:0000255" key="1">
    <source>
        <dbReference type="HAMAP-Rule" id="MF_01320"/>
    </source>
</evidence>
<evidence type="ECO:0000256" key="2">
    <source>
        <dbReference type="SAM" id="MobiDB-lite"/>
    </source>
</evidence>
<evidence type="ECO:0000305" key="3"/>
<gene>
    <name evidence="1" type="primary">rplB</name>
    <name type="ordered locus">Ping_3521</name>
</gene>
<proteinExistence type="inferred from homology"/>
<name>RL2_PSYIN</name>
<accession>A1T0D9</accession>